<reference key="1">
    <citation type="journal article" date="2008" name="Environ. Microbiol.">
        <title>The genome of Erwinia tasmaniensis strain Et1/99, a non-pathogenic bacterium in the genus Erwinia.</title>
        <authorList>
            <person name="Kube M."/>
            <person name="Migdoll A.M."/>
            <person name="Mueller I."/>
            <person name="Kuhl H."/>
            <person name="Beck A."/>
            <person name="Reinhardt R."/>
            <person name="Geider K."/>
        </authorList>
    </citation>
    <scope>NUCLEOTIDE SEQUENCE [LARGE SCALE GENOMIC DNA]</scope>
    <source>
        <strain>DSM 17950 / CFBP 7177 / CIP 109463 / NCPPB 4357 / Et1/99</strain>
    </source>
</reference>
<gene>
    <name evidence="1" type="primary">rppH</name>
    <name evidence="1" type="synonym">nudH</name>
    <name type="ordered locus">ETA_27620</name>
</gene>
<dbReference type="EC" id="3.6.1.-" evidence="1"/>
<dbReference type="EMBL" id="CU468135">
    <property type="protein sequence ID" value="CAO97808.1"/>
    <property type="molecule type" value="Genomic_DNA"/>
</dbReference>
<dbReference type="RefSeq" id="WP_012442465.1">
    <property type="nucleotide sequence ID" value="NC_010694.1"/>
</dbReference>
<dbReference type="SMR" id="B2VFV0"/>
<dbReference type="STRING" id="465817.ETA_27620"/>
<dbReference type="KEGG" id="eta:ETA_27620"/>
<dbReference type="eggNOG" id="COG1051">
    <property type="taxonomic scope" value="Bacteria"/>
</dbReference>
<dbReference type="HOGENOM" id="CLU_087195_3_2_6"/>
<dbReference type="OrthoDB" id="9816040at2"/>
<dbReference type="Proteomes" id="UP000001726">
    <property type="component" value="Chromosome"/>
</dbReference>
<dbReference type="GO" id="GO:0005737">
    <property type="term" value="C:cytoplasm"/>
    <property type="evidence" value="ECO:0007669"/>
    <property type="project" value="TreeGrafter"/>
</dbReference>
<dbReference type="GO" id="GO:0034353">
    <property type="term" value="F:mRNA 5'-diphosphatase activity"/>
    <property type="evidence" value="ECO:0007669"/>
    <property type="project" value="TreeGrafter"/>
</dbReference>
<dbReference type="GO" id="GO:0006402">
    <property type="term" value="P:mRNA catabolic process"/>
    <property type="evidence" value="ECO:0007669"/>
    <property type="project" value="TreeGrafter"/>
</dbReference>
<dbReference type="CDD" id="cd03671">
    <property type="entry name" value="NUDIX_Ap4A_hydrolase_plant_like"/>
    <property type="match status" value="1"/>
</dbReference>
<dbReference type="FunFam" id="3.90.79.10:FF:000001">
    <property type="entry name" value="RNA pyrophosphohydrolase"/>
    <property type="match status" value="1"/>
</dbReference>
<dbReference type="Gene3D" id="3.90.79.10">
    <property type="entry name" value="Nucleoside Triphosphate Pyrophosphohydrolase"/>
    <property type="match status" value="1"/>
</dbReference>
<dbReference type="HAMAP" id="MF_00298">
    <property type="entry name" value="Nudix_RppH"/>
    <property type="match status" value="1"/>
</dbReference>
<dbReference type="InterPro" id="IPR020476">
    <property type="entry name" value="Nudix_hydrolase"/>
</dbReference>
<dbReference type="InterPro" id="IPR015797">
    <property type="entry name" value="NUDIX_hydrolase-like_dom_sf"/>
</dbReference>
<dbReference type="InterPro" id="IPR020084">
    <property type="entry name" value="NUDIX_hydrolase_CS"/>
</dbReference>
<dbReference type="InterPro" id="IPR000086">
    <property type="entry name" value="NUDIX_hydrolase_dom"/>
</dbReference>
<dbReference type="InterPro" id="IPR022927">
    <property type="entry name" value="RppH"/>
</dbReference>
<dbReference type="NCBIfam" id="NF001934">
    <property type="entry name" value="PRK00714.1-1"/>
    <property type="match status" value="1"/>
</dbReference>
<dbReference type="NCBIfam" id="NF001937">
    <property type="entry name" value="PRK00714.1-4"/>
    <property type="match status" value="1"/>
</dbReference>
<dbReference type="NCBIfam" id="NF001938">
    <property type="entry name" value="PRK00714.1-5"/>
    <property type="match status" value="1"/>
</dbReference>
<dbReference type="PANTHER" id="PTHR23114">
    <property type="entry name" value="M7GPPPN-MRNA HYDROLASE"/>
    <property type="match status" value="1"/>
</dbReference>
<dbReference type="PANTHER" id="PTHR23114:SF17">
    <property type="entry name" value="M7GPPPN-MRNA HYDROLASE"/>
    <property type="match status" value="1"/>
</dbReference>
<dbReference type="Pfam" id="PF00293">
    <property type="entry name" value="NUDIX"/>
    <property type="match status" value="1"/>
</dbReference>
<dbReference type="PRINTS" id="PR00502">
    <property type="entry name" value="NUDIXFAMILY"/>
</dbReference>
<dbReference type="SUPFAM" id="SSF55811">
    <property type="entry name" value="Nudix"/>
    <property type="match status" value="1"/>
</dbReference>
<dbReference type="PROSITE" id="PS51462">
    <property type="entry name" value="NUDIX"/>
    <property type="match status" value="1"/>
</dbReference>
<dbReference type="PROSITE" id="PS00893">
    <property type="entry name" value="NUDIX_BOX"/>
    <property type="match status" value="1"/>
</dbReference>
<proteinExistence type="inferred from homology"/>
<evidence type="ECO:0000255" key="1">
    <source>
        <dbReference type="HAMAP-Rule" id="MF_00298"/>
    </source>
</evidence>
<organism>
    <name type="scientific">Erwinia tasmaniensis (strain DSM 17950 / CFBP 7177 / CIP 109463 / NCPPB 4357 / Et1/99)</name>
    <dbReference type="NCBI Taxonomy" id="465817"/>
    <lineage>
        <taxon>Bacteria</taxon>
        <taxon>Pseudomonadati</taxon>
        <taxon>Pseudomonadota</taxon>
        <taxon>Gammaproteobacteria</taxon>
        <taxon>Enterobacterales</taxon>
        <taxon>Erwiniaceae</taxon>
        <taxon>Erwinia</taxon>
    </lineage>
</organism>
<comment type="function">
    <text evidence="1">Accelerates the degradation of transcripts by removing pyrophosphate from the 5'-end of triphosphorylated RNA, leading to a more labile monophosphorylated state that can stimulate subsequent ribonuclease cleavage.</text>
</comment>
<comment type="cofactor">
    <cofactor evidence="1">
        <name>a divalent metal cation</name>
        <dbReference type="ChEBI" id="CHEBI:60240"/>
    </cofactor>
</comment>
<comment type="similarity">
    <text evidence="1">Belongs to the Nudix hydrolase family. RppH subfamily.</text>
</comment>
<feature type="chain" id="PRO_1000115278" description="RNA pyrophosphohydrolase">
    <location>
        <begin position="1"/>
        <end position="175"/>
    </location>
</feature>
<feature type="domain" description="Nudix hydrolase" evidence="1">
    <location>
        <begin position="6"/>
        <end position="149"/>
    </location>
</feature>
<feature type="short sequence motif" description="Nudix box">
    <location>
        <begin position="38"/>
        <end position="59"/>
    </location>
</feature>
<protein>
    <recommendedName>
        <fullName evidence="1">RNA pyrophosphohydrolase</fullName>
        <ecNumber evidence="1">3.6.1.-</ecNumber>
    </recommendedName>
    <alternativeName>
        <fullName evidence="1">(Di)nucleoside polyphosphate hydrolase</fullName>
    </alternativeName>
</protein>
<name>RPPH_ERWT9</name>
<keyword id="KW-0378">Hydrolase</keyword>
<keyword id="KW-1185">Reference proteome</keyword>
<sequence>MIDDDGYRPNVGIVICNRQGQVLWARRFGQHSWQFPQGGINPGETAEQAMYRELFEEVGLNRKDVRILAATRNWLRYKLPKRLVRWDTKPVCIGQKQKWYLLQLMCNDADINMQTSSTPEFDGWRWVSYWYPVRQVVSFKRDVYRRVMKEFASVVMPLQESTTQRNTPGYRRKRG</sequence>
<accession>B2VFV0</accession>